<sequence>MNELIKHKLELLPDSPGCYLHKDKNGTIIYVGKAKNLKNRVKSYFHGSHNTKTELLVSEIEDFEYIVTTSNTEALLLEINLIQENMPKYNIRLKDDKSYPYIKITNERYPRLMITRQVKKSDGTYFGPYPDSGAATEIKRLLDRLFPFKKCTNPANKVCFYYHLGQCNAHTVCQTNKAYWDSLREDVKQFLNGKDNKIVNGLTEKMKSAAMTMEFERAAEYRDLIEAISLLRTKQRVIHQDMKDRDVFGYFVDKGWMCVQVFFVRNGKLIQRDVNMFPYYNEPEEDFLTYIGQFYQDTKHFLPKEVFIPQDIDAKSVETIVGCKIVKPQRGEKKQLVNLAIKNARVSLQQKFDLLEKDIRKTHGAIENLGNLLNIPKPVRIEAFDNSNIQGTSPVAAMVVFVNGKPSKKDYRKFKIKTVIGPDDYASMREVIHRRYSRVLKDGLTPPDLIVIDGGQGQVNIARDVIENQLGLAIPIAGLQKNDKHQTHELLFGDPLEVVELPRNSEEFFLLHRIQDEVHRFAITFHRQLRSKNSFSSKLDGITGLGPKRKQLLMKHFKSLPNIQKAEIEDIIMCGIPRTVAESLRDSLNDPPK</sequence>
<feature type="chain" id="PRO_0000227477" description="UvrABC system protein C">
    <location>
        <begin position="1"/>
        <end position="593"/>
    </location>
</feature>
<feature type="domain" description="GIY-YIG" evidence="1">
    <location>
        <begin position="14"/>
        <end position="91"/>
    </location>
</feature>
<feature type="domain" description="UVR" evidence="1">
    <location>
        <begin position="196"/>
        <end position="231"/>
    </location>
</feature>
<gene>
    <name evidence="1" type="primary">uvrC</name>
    <name type="ordered locus">gbs1294</name>
</gene>
<protein>
    <recommendedName>
        <fullName evidence="1">UvrABC system protein C</fullName>
        <shortName evidence="1">Protein UvrC</shortName>
    </recommendedName>
    <alternativeName>
        <fullName evidence="1">Excinuclease ABC subunit C</fullName>
    </alternativeName>
</protein>
<keyword id="KW-0963">Cytoplasm</keyword>
<keyword id="KW-0227">DNA damage</keyword>
<keyword id="KW-0228">DNA excision</keyword>
<keyword id="KW-0234">DNA repair</keyword>
<keyword id="KW-0267">Excision nuclease</keyword>
<keyword id="KW-0742">SOS response</keyword>
<comment type="function">
    <text evidence="1">The UvrABC repair system catalyzes the recognition and processing of DNA lesions. UvrC both incises the 5' and 3' sides of the lesion. The N-terminal half is responsible for the 3' incision and the C-terminal half is responsible for the 5' incision.</text>
</comment>
<comment type="subunit">
    <text evidence="1">Interacts with UvrB in an incision complex.</text>
</comment>
<comment type="subcellular location">
    <subcellularLocation>
        <location evidence="1">Cytoplasm</location>
    </subcellularLocation>
</comment>
<comment type="similarity">
    <text evidence="1">Belongs to the UvrC family.</text>
</comment>
<reference key="1">
    <citation type="journal article" date="2002" name="Mol. Microbiol.">
        <title>Genome sequence of Streptococcus agalactiae, a pathogen causing invasive neonatal disease.</title>
        <authorList>
            <person name="Glaser P."/>
            <person name="Rusniok C."/>
            <person name="Buchrieser C."/>
            <person name="Chevalier F."/>
            <person name="Frangeul L."/>
            <person name="Msadek T."/>
            <person name="Zouine M."/>
            <person name="Couve E."/>
            <person name="Lalioui L."/>
            <person name="Poyart C."/>
            <person name="Trieu-Cuot P."/>
            <person name="Kunst F."/>
        </authorList>
    </citation>
    <scope>NUCLEOTIDE SEQUENCE [LARGE SCALE GENOMIC DNA]</scope>
    <source>
        <strain>NEM316</strain>
    </source>
</reference>
<dbReference type="EMBL" id="AL766850">
    <property type="protein sequence ID" value="CAD46953.1"/>
    <property type="molecule type" value="Genomic_DNA"/>
</dbReference>
<dbReference type="RefSeq" id="WP_001003953.1">
    <property type="nucleotide sequence ID" value="NC_004368.1"/>
</dbReference>
<dbReference type="SMR" id="Q8CX26"/>
<dbReference type="KEGG" id="san:uvrC"/>
<dbReference type="eggNOG" id="COG0322">
    <property type="taxonomic scope" value="Bacteria"/>
</dbReference>
<dbReference type="HOGENOM" id="CLU_014841_3_2_9"/>
<dbReference type="Proteomes" id="UP000000823">
    <property type="component" value="Chromosome"/>
</dbReference>
<dbReference type="GO" id="GO:0005737">
    <property type="term" value="C:cytoplasm"/>
    <property type="evidence" value="ECO:0007669"/>
    <property type="project" value="UniProtKB-SubCell"/>
</dbReference>
<dbReference type="GO" id="GO:0009380">
    <property type="term" value="C:excinuclease repair complex"/>
    <property type="evidence" value="ECO:0007669"/>
    <property type="project" value="InterPro"/>
</dbReference>
<dbReference type="GO" id="GO:0003677">
    <property type="term" value="F:DNA binding"/>
    <property type="evidence" value="ECO:0007669"/>
    <property type="project" value="UniProtKB-UniRule"/>
</dbReference>
<dbReference type="GO" id="GO:0009381">
    <property type="term" value="F:excinuclease ABC activity"/>
    <property type="evidence" value="ECO:0007669"/>
    <property type="project" value="UniProtKB-UniRule"/>
</dbReference>
<dbReference type="GO" id="GO:0006289">
    <property type="term" value="P:nucleotide-excision repair"/>
    <property type="evidence" value="ECO:0007669"/>
    <property type="project" value="UniProtKB-UniRule"/>
</dbReference>
<dbReference type="GO" id="GO:0009432">
    <property type="term" value="P:SOS response"/>
    <property type="evidence" value="ECO:0007669"/>
    <property type="project" value="UniProtKB-UniRule"/>
</dbReference>
<dbReference type="CDD" id="cd10434">
    <property type="entry name" value="GIY-YIG_UvrC_Cho"/>
    <property type="match status" value="1"/>
</dbReference>
<dbReference type="FunFam" id="3.30.420.340:FF:000002">
    <property type="entry name" value="UvrABC system protein C"/>
    <property type="match status" value="1"/>
</dbReference>
<dbReference type="FunFam" id="3.40.1440.10:FF:000001">
    <property type="entry name" value="UvrABC system protein C"/>
    <property type="match status" value="1"/>
</dbReference>
<dbReference type="Gene3D" id="1.10.150.20">
    <property type="entry name" value="5' to 3' exonuclease, C-terminal subdomain"/>
    <property type="match status" value="1"/>
</dbReference>
<dbReference type="Gene3D" id="3.40.1440.10">
    <property type="entry name" value="GIY-YIG endonuclease"/>
    <property type="match status" value="1"/>
</dbReference>
<dbReference type="Gene3D" id="4.10.860.10">
    <property type="entry name" value="UVR domain"/>
    <property type="match status" value="1"/>
</dbReference>
<dbReference type="Gene3D" id="3.30.420.340">
    <property type="entry name" value="UvrC, RNAse H endonuclease domain"/>
    <property type="match status" value="1"/>
</dbReference>
<dbReference type="HAMAP" id="MF_00203">
    <property type="entry name" value="UvrC"/>
    <property type="match status" value="1"/>
</dbReference>
<dbReference type="InterPro" id="IPR000305">
    <property type="entry name" value="GIY-YIG_endonuc"/>
</dbReference>
<dbReference type="InterPro" id="IPR035901">
    <property type="entry name" value="GIY-YIG_endonuc_sf"/>
</dbReference>
<dbReference type="InterPro" id="IPR047296">
    <property type="entry name" value="GIY-YIG_UvrC_Cho"/>
</dbReference>
<dbReference type="InterPro" id="IPR010994">
    <property type="entry name" value="RuvA_2-like"/>
</dbReference>
<dbReference type="InterPro" id="IPR001943">
    <property type="entry name" value="UVR_dom"/>
</dbReference>
<dbReference type="InterPro" id="IPR036876">
    <property type="entry name" value="UVR_dom_sf"/>
</dbReference>
<dbReference type="InterPro" id="IPR050066">
    <property type="entry name" value="UvrABC_protein_C"/>
</dbReference>
<dbReference type="InterPro" id="IPR004791">
    <property type="entry name" value="UvrC"/>
</dbReference>
<dbReference type="InterPro" id="IPR001162">
    <property type="entry name" value="UvrC_RNase_H_dom"/>
</dbReference>
<dbReference type="InterPro" id="IPR038476">
    <property type="entry name" value="UvrC_RNase_H_dom_sf"/>
</dbReference>
<dbReference type="NCBIfam" id="TIGR00194">
    <property type="entry name" value="uvrC"/>
    <property type="match status" value="1"/>
</dbReference>
<dbReference type="PANTHER" id="PTHR30562:SF1">
    <property type="entry name" value="UVRABC SYSTEM PROTEIN C"/>
    <property type="match status" value="1"/>
</dbReference>
<dbReference type="PANTHER" id="PTHR30562">
    <property type="entry name" value="UVRC/OXIDOREDUCTASE"/>
    <property type="match status" value="1"/>
</dbReference>
<dbReference type="Pfam" id="PF01541">
    <property type="entry name" value="GIY-YIG"/>
    <property type="match status" value="1"/>
</dbReference>
<dbReference type="Pfam" id="PF02151">
    <property type="entry name" value="UVR"/>
    <property type="match status" value="1"/>
</dbReference>
<dbReference type="Pfam" id="PF22920">
    <property type="entry name" value="UvrC_RNaseH"/>
    <property type="match status" value="1"/>
</dbReference>
<dbReference type="Pfam" id="PF08459">
    <property type="entry name" value="UvrC_RNaseH_dom"/>
    <property type="match status" value="1"/>
</dbReference>
<dbReference type="SMART" id="SM00465">
    <property type="entry name" value="GIYc"/>
    <property type="match status" value="1"/>
</dbReference>
<dbReference type="SUPFAM" id="SSF46600">
    <property type="entry name" value="C-terminal UvrC-binding domain of UvrB"/>
    <property type="match status" value="1"/>
</dbReference>
<dbReference type="SUPFAM" id="SSF82771">
    <property type="entry name" value="GIY-YIG endonuclease"/>
    <property type="match status" value="1"/>
</dbReference>
<dbReference type="SUPFAM" id="SSF47781">
    <property type="entry name" value="RuvA domain 2-like"/>
    <property type="match status" value="1"/>
</dbReference>
<dbReference type="PROSITE" id="PS50164">
    <property type="entry name" value="GIY_YIG"/>
    <property type="match status" value="1"/>
</dbReference>
<dbReference type="PROSITE" id="PS50151">
    <property type="entry name" value="UVR"/>
    <property type="match status" value="1"/>
</dbReference>
<dbReference type="PROSITE" id="PS50165">
    <property type="entry name" value="UVRC"/>
    <property type="match status" value="1"/>
</dbReference>
<evidence type="ECO:0000255" key="1">
    <source>
        <dbReference type="HAMAP-Rule" id="MF_00203"/>
    </source>
</evidence>
<proteinExistence type="inferred from homology"/>
<accession>Q8CX26</accession>
<name>UVRC_STRA3</name>
<organism>
    <name type="scientific">Streptococcus agalactiae serotype III (strain NEM316)</name>
    <dbReference type="NCBI Taxonomy" id="211110"/>
    <lineage>
        <taxon>Bacteria</taxon>
        <taxon>Bacillati</taxon>
        <taxon>Bacillota</taxon>
        <taxon>Bacilli</taxon>
        <taxon>Lactobacillales</taxon>
        <taxon>Streptococcaceae</taxon>
        <taxon>Streptococcus</taxon>
    </lineage>
</organism>